<comment type="function">
    <text evidence="2">Catalyzes the formation of N(7)-methylguanine at position 46 (m7G46) in tRNA.</text>
</comment>
<comment type="catalytic activity">
    <reaction evidence="2">
        <text>guanosine(46) in tRNA + S-adenosyl-L-methionine = N(7)-methylguanosine(46) in tRNA + S-adenosyl-L-homocysteine</text>
        <dbReference type="Rhea" id="RHEA:42708"/>
        <dbReference type="Rhea" id="RHEA-COMP:10188"/>
        <dbReference type="Rhea" id="RHEA-COMP:10189"/>
        <dbReference type="ChEBI" id="CHEBI:57856"/>
        <dbReference type="ChEBI" id="CHEBI:59789"/>
        <dbReference type="ChEBI" id="CHEBI:74269"/>
        <dbReference type="ChEBI" id="CHEBI:74480"/>
        <dbReference type="EC" id="2.1.1.33"/>
    </reaction>
</comment>
<comment type="pathway">
    <text evidence="2">tRNA modification; N(7)-methylguanine-tRNA biosynthesis.</text>
</comment>
<comment type="similarity">
    <text evidence="2">Belongs to the class I-like SAM-binding methyltransferase superfamily. TrmB family.</text>
</comment>
<name>TRMB_BACC3</name>
<organism>
    <name type="scientific">Bacillus cereus (strain 03BB102)</name>
    <dbReference type="NCBI Taxonomy" id="572264"/>
    <lineage>
        <taxon>Bacteria</taxon>
        <taxon>Bacillati</taxon>
        <taxon>Bacillota</taxon>
        <taxon>Bacilli</taxon>
        <taxon>Bacillales</taxon>
        <taxon>Bacillaceae</taxon>
        <taxon>Bacillus</taxon>
        <taxon>Bacillus cereus group</taxon>
    </lineage>
</organism>
<gene>
    <name evidence="2" type="primary">trmB</name>
    <name type="ordered locus">BCA_4821</name>
</gene>
<reference key="1">
    <citation type="submission" date="2009-02" db="EMBL/GenBank/DDBJ databases">
        <title>Genome sequence of Bacillus cereus 03BB102.</title>
        <authorList>
            <person name="Dodson R.J."/>
            <person name="Jackson P."/>
            <person name="Munk A.C."/>
            <person name="Brettin T."/>
            <person name="Bruce D."/>
            <person name="Detter C."/>
            <person name="Tapia R."/>
            <person name="Han C."/>
            <person name="Sutton G."/>
            <person name="Sims D."/>
        </authorList>
    </citation>
    <scope>NUCLEOTIDE SEQUENCE [LARGE SCALE GENOMIC DNA]</scope>
    <source>
        <strain>03BB102</strain>
    </source>
</reference>
<dbReference type="EC" id="2.1.1.33" evidence="2"/>
<dbReference type="EMBL" id="CP001407">
    <property type="protein sequence ID" value="ACO30547.1"/>
    <property type="molecule type" value="Genomic_DNA"/>
</dbReference>
<dbReference type="RefSeq" id="WP_001239373.1">
    <property type="nucleotide sequence ID" value="NZ_CP009318.1"/>
</dbReference>
<dbReference type="SMR" id="C1EVW6"/>
<dbReference type="KEGG" id="bcx:BCA_4821"/>
<dbReference type="PATRIC" id="fig|572264.18.peg.4771"/>
<dbReference type="UniPathway" id="UPA00989"/>
<dbReference type="Proteomes" id="UP000002210">
    <property type="component" value="Chromosome"/>
</dbReference>
<dbReference type="GO" id="GO:0043527">
    <property type="term" value="C:tRNA methyltransferase complex"/>
    <property type="evidence" value="ECO:0007669"/>
    <property type="project" value="TreeGrafter"/>
</dbReference>
<dbReference type="GO" id="GO:0008176">
    <property type="term" value="F:tRNA (guanine(46)-N7)-methyltransferase activity"/>
    <property type="evidence" value="ECO:0007669"/>
    <property type="project" value="UniProtKB-UniRule"/>
</dbReference>
<dbReference type="CDD" id="cd02440">
    <property type="entry name" value="AdoMet_MTases"/>
    <property type="match status" value="1"/>
</dbReference>
<dbReference type="FunFam" id="3.40.50.150:FF:000035">
    <property type="entry name" value="tRNA (guanine-N(7)-)-methyltransferase"/>
    <property type="match status" value="1"/>
</dbReference>
<dbReference type="Gene3D" id="3.40.50.150">
    <property type="entry name" value="Vaccinia Virus protein VP39"/>
    <property type="match status" value="1"/>
</dbReference>
<dbReference type="HAMAP" id="MF_01057">
    <property type="entry name" value="tRNA_methyltr_TrmB"/>
    <property type="match status" value="1"/>
</dbReference>
<dbReference type="InterPro" id="IPR029063">
    <property type="entry name" value="SAM-dependent_MTases_sf"/>
</dbReference>
<dbReference type="InterPro" id="IPR003358">
    <property type="entry name" value="tRNA_(Gua-N-7)_MeTrfase_Trmb"/>
</dbReference>
<dbReference type="InterPro" id="IPR055361">
    <property type="entry name" value="tRNA_methyltr_TrmB_bact"/>
</dbReference>
<dbReference type="NCBIfam" id="NF001080">
    <property type="entry name" value="PRK00121.2-2"/>
    <property type="match status" value="1"/>
</dbReference>
<dbReference type="NCBIfam" id="TIGR00091">
    <property type="entry name" value="tRNA (guanosine(46)-N7)-methyltransferase TrmB"/>
    <property type="match status" value="1"/>
</dbReference>
<dbReference type="PANTHER" id="PTHR23417">
    <property type="entry name" value="3-DEOXY-D-MANNO-OCTULOSONIC-ACID TRANSFERASE/TRNA GUANINE-N 7 - -METHYLTRANSFERASE"/>
    <property type="match status" value="1"/>
</dbReference>
<dbReference type="PANTHER" id="PTHR23417:SF14">
    <property type="entry name" value="PENTACOTRIPEPTIDE-REPEAT REGION OF PRORP DOMAIN-CONTAINING PROTEIN"/>
    <property type="match status" value="1"/>
</dbReference>
<dbReference type="Pfam" id="PF02390">
    <property type="entry name" value="Methyltransf_4"/>
    <property type="match status" value="1"/>
</dbReference>
<dbReference type="SUPFAM" id="SSF53335">
    <property type="entry name" value="S-adenosyl-L-methionine-dependent methyltransferases"/>
    <property type="match status" value="1"/>
</dbReference>
<dbReference type="PROSITE" id="PS51625">
    <property type="entry name" value="SAM_MT_TRMB"/>
    <property type="match status" value="1"/>
</dbReference>
<proteinExistence type="inferred from homology"/>
<evidence type="ECO:0000250" key="1"/>
<evidence type="ECO:0000255" key="2">
    <source>
        <dbReference type="HAMAP-Rule" id="MF_01057"/>
    </source>
</evidence>
<keyword id="KW-0489">Methyltransferase</keyword>
<keyword id="KW-0949">S-adenosyl-L-methionine</keyword>
<keyword id="KW-0808">Transferase</keyword>
<keyword id="KW-0819">tRNA processing</keyword>
<sequence length="217" mass="25634">MRLRHKPYAMDRINEYSHFVIGNPEERAGNWKEVFGNEQPIHIEVGTGRGRFMYDMAKANPHINYIGIEKFTSVVVDALDKLIEEELPNLKLINKDAEDLTVFFAKGEIDRVYLNFSDPWPKKRHTKRRLTYKTFLRNYEEVLVEGGEIHFKTDNQGLFEYSLMSMAEYGMLLTYLSLDLHNSDFEGNIMTEYEEKFSSKGHRIYRVEAKYRTEPMQ</sequence>
<accession>C1EVW6</accession>
<feature type="chain" id="PRO_1000149644" description="tRNA (guanine-N(7)-)-methyltransferase">
    <location>
        <begin position="1"/>
        <end position="217"/>
    </location>
</feature>
<feature type="active site" evidence="1">
    <location>
        <position position="118"/>
    </location>
</feature>
<feature type="binding site" evidence="2">
    <location>
        <position position="44"/>
    </location>
    <ligand>
        <name>S-adenosyl-L-methionine</name>
        <dbReference type="ChEBI" id="CHEBI:59789"/>
    </ligand>
</feature>
<feature type="binding site" evidence="2">
    <location>
        <position position="69"/>
    </location>
    <ligand>
        <name>S-adenosyl-L-methionine</name>
        <dbReference type="ChEBI" id="CHEBI:59789"/>
    </ligand>
</feature>
<feature type="binding site" evidence="2">
    <location>
        <position position="96"/>
    </location>
    <ligand>
        <name>S-adenosyl-L-methionine</name>
        <dbReference type="ChEBI" id="CHEBI:59789"/>
    </ligand>
</feature>
<feature type="binding site" evidence="2">
    <location>
        <position position="118"/>
    </location>
    <ligand>
        <name>S-adenosyl-L-methionine</name>
        <dbReference type="ChEBI" id="CHEBI:59789"/>
    </ligand>
</feature>
<feature type="binding site" evidence="2">
    <location>
        <position position="122"/>
    </location>
    <ligand>
        <name>substrate</name>
    </ligand>
</feature>
<feature type="binding site" evidence="2">
    <location>
        <position position="154"/>
    </location>
    <ligand>
        <name>substrate</name>
    </ligand>
</feature>
<feature type="binding site" evidence="2">
    <location>
        <begin position="191"/>
        <end position="194"/>
    </location>
    <ligand>
        <name>substrate</name>
    </ligand>
</feature>
<protein>
    <recommendedName>
        <fullName evidence="2">tRNA (guanine-N(7)-)-methyltransferase</fullName>
        <ecNumber evidence="2">2.1.1.33</ecNumber>
    </recommendedName>
    <alternativeName>
        <fullName evidence="2">tRNA (guanine(46)-N(7))-methyltransferase</fullName>
    </alternativeName>
    <alternativeName>
        <fullName evidence="2">tRNA(m7G46)-methyltransferase</fullName>
    </alternativeName>
</protein>